<protein>
    <recommendedName>
        <fullName evidence="1">Large ribosomal subunit protein uL18</fullName>
    </recommendedName>
    <alternativeName>
        <fullName evidence="2">50S ribosomal protein L18</fullName>
    </alternativeName>
</protein>
<sequence length="120" mass="13019">MITKADKNAVRKKRHARVRRTITGTAARPRLNVFRSSKHIYVQLIDDAAQTTLVSASSKDKALDLTNGGNVEAAKAVGKLAAERALEKGIDTVVFDRGGYLYHGRVKAVAEAAREAGLKF</sequence>
<evidence type="ECO:0000255" key="1">
    <source>
        <dbReference type="HAMAP-Rule" id="MF_01337"/>
    </source>
</evidence>
<evidence type="ECO:0000305" key="2"/>
<dbReference type="EMBL" id="CP001615">
    <property type="protein sequence ID" value="ACQ70543.1"/>
    <property type="molecule type" value="Genomic_DNA"/>
</dbReference>
<dbReference type="RefSeq" id="WP_012727661.1">
    <property type="nucleotide sequence ID" value="NC_012673.1"/>
</dbReference>
<dbReference type="SMR" id="C4KZN0"/>
<dbReference type="STRING" id="360911.EAT1b_1617"/>
<dbReference type="GeneID" id="94370759"/>
<dbReference type="KEGG" id="eat:EAT1b_1617"/>
<dbReference type="eggNOG" id="COG0256">
    <property type="taxonomic scope" value="Bacteria"/>
</dbReference>
<dbReference type="HOGENOM" id="CLU_098841_0_1_9"/>
<dbReference type="OrthoDB" id="9810939at2"/>
<dbReference type="Proteomes" id="UP000000716">
    <property type="component" value="Chromosome"/>
</dbReference>
<dbReference type="GO" id="GO:0022625">
    <property type="term" value="C:cytosolic large ribosomal subunit"/>
    <property type="evidence" value="ECO:0007669"/>
    <property type="project" value="TreeGrafter"/>
</dbReference>
<dbReference type="GO" id="GO:0008097">
    <property type="term" value="F:5S rRNA binding"/>
    <property type="evidence" value="ECO:0007669"/>
    <property type="project" value="TreeGrafter"/>
</dbReference>
<dbReference type="GO" id="GO:0003735">
    <property type="term" value="F:structural constituent of ribosome"/>
    <property type="evidence" value="ECO:0007669"/>
    <property type="project" value="InterPro"/>
</dbReference>
<dbReference type="GO" id="GO:0006412">
    <property type="term" value="P:translation"/>
    <property type="evidence" value="ECO:0007669"/>
    <property type="project" value="UniProtKB-UniRule"/>
</dbReference>
<dbReference type="CDD" id="cd00432">
    <property type="entry name" value="Ribosomal_L18_L5e"/>
    <property type="match status" value="1"/>
</dbReference>
<dbReference type="FunFam" id="3.30.420.100:FF:000001">
    <property type="entry name" value="50S ribosomal protein L18"/>
    <property type="match status" value="1"/>
</dbReference>
<dbReference type="Gene3D" id="3.30.420.100">
    <property type="match status" value="1"/>
</dbReference>
<dbReference type="HAMAP" id="MF_01337_B">
    <property type="entry name" value="Ribosomal_uL18_B"/>
    <property type="match status" value="1"/>
</dbReference>
<dbReference type="InterPro" id="IPR004389">
    <property type="entry name" value="Ribosomal_uL18_bac-type"/>
</dbReference>
<dbReference type="InterPro" id="IPR005484">
    <property type="entry name" value="Ribosomal_uL18_bac/euk"/>
</dbReference>
<dbReference type="NCBIfam" id="TIGR00060">
    <property type="entry name" value="L18_bact"/>
    <property type="match status" value="1"/>
</dbReference>
<dbReference type="PANTHER" id="PTHR12899">
    <property type="entry name" value="39S RIBOSOMAL PROTEIN L18, MITOCHONDRIAL"/>
    <property type="match status" value="1"/>
</dbReference>
<dbReference type="PANTHER" id="PTHR12899:SF3">
    <property type="entry name" value="LARGE RIBOSOMAL SUBUNIT PROTEIN UL18M"/>
    <property type="match status" value="1"/>
</dbReference>
<dbReference type="Pfam" id="PF00861">
    <property type="entry name" value="Ribosomal_L18p"/>
    <property type="match status" value="1"/>
</dbReference>
<dbReference type="SUPFAM" id="SSF53137">
    <property type="entry name" value="Translational machinery components"/>
    <property type="match status" value="1"/>
</dbReference>
<organism>
    <name type="scientific">Exiguobacterium sp. (strain ATCC BAA-1283 / AT1b)</name>
    <dbReference type="NCBI Taxonomy" id="360911"/>
    <lineage>
        <taxon>Bacteria</taxon>
        <taxon>Bacillati</taxon>
        <taxon>Bacillota</taxon>
        <taxon>Bacilli</taxon>
        <taxon>Bacillales</taxon>
        <taxon>Bacillales Family XII. Incertae Sedis</taxon>
        <taxon>Exiguobacterium</taxon>
    </lineage>
</organism>
<name>RL18_EXISA</name>
<proteinExistence type="inferred from homology"/>
<keyword id="KW-0687">Ribonucleoprotein</keyword>
<keyword id="KW-0689">Ribosomal protein</keyword>
<keyword id="KW-0694">RNA-binding</keyword>
<keyword id="KW-0699">rRNA-binding</keyword>
<feature type="chain" id="PRO_1000214673" description="Large ribosomal subunit protein uL18">
    <location>
        <begin position="1"/>
        <end position="120"/>
    </location>
</feature>
<accession>C4KZN0</accession>
<comment type="function">
    <text evidence="1">This is one of the proteins that bind and probably mediate the attachment of the 5S RNA into the large ribosomal subunit, where it forms part of the central protuberance.</text>
</comment>
<comment type="subunit">
    <text evidence="1">Part of the 50S ribosomal subunit; part of the 5S rRNA/L5/L18/L25 subcomplex. Contacts the 5S and 23S rRNAs.</text>
</comment>
<comment type="similarity">
    <text evidence="1">Belongs to the universal ribosomal protein uL18 family.</text>
</comment>
<reference key="1">
    <citation type="journal article" date="2011" name="J. Bacteriol.">
        <title>Complete genome sequence of the Thermophilic Bacterium Exiguobacterium sp. AT1b.</title>
        <authorList>
            <person name="Vishnivetskaya T.A."/>
            <person name="Lucas S."/>
            <person name="Copeland A."/>
            <person name="Lapidus A."/>
            <person name="Glavina del Rio T."/>
            <person name="Dalin E."/>
            <person name="Tice H."/>
            <person name="Bruce D.C."/>
            <person name="Goodwin L.A."/>
            <person name="Pitluck S."/>
            <person name="Saunders E."/>
            <person name="Brettin T."/>
            <person name="Detter C."/>
            <person name="Han C."/>
            <person name="Larimer F."/>
            <person name="Land M.L."/>
            <person name="Hauser L.J."/>
            <person name="Kyrpides N.C."/>
            <person name="Ovchinnikova G."/>
            <person name="Kathariou S."/>
            <person name="Ramaley R.F."/>
            <person name="Rodrigues D.F."/>
            <person name="Hendrix C."/>
            <person name="Richardson P."/>
            <person name="Tiedje J.M."/>
        </authorList>
    </citation>
    <scope>NUCLEOTIDE SEQUENCE [LARGE SCALE GENOMIC DNA]</scope>
    <source>
        <strain>ATCC BAA-1283 / AT1b</strain>
    </source>
</reference>
<gene>
    <name evidence="1" type="primary">rplR</name>
    <name type="ordered locus">EAT1b_1617</name>
</gene>